<keyword id="KW-0004">4Fe-4S</keyword>
<keyword id="KW-0169">Cobalamin biosynthesis</keyword>
<keyword id="KW-0408">Iron</keyword>
<keyword id="KW-0411">Iron-sulfur</keyword>
<keyword id="KW-0456">Lyase</keyword>
<keyword id="KW-0479">Metal-binding</keyword>
<keyword id="KW-1185">Reference proteome</keyword>
<keyword id="KW-0949">S-adenosyl-L-methionine</keyword>
<keyword id="KW-0862">Zinc</keyword>
<accession>C0QJ00</accession>
<organism>
    <name type="scientific">Desulforapulum autotrophicum (strain ATCC 43914 / DSM 3382 / VKM B-1955 / HRM2)</name>
    <name type="common">Desulfobacterium autotrophicum</name>
    <dbReference type="NCBI Taxonomy" id="177437"/>
    <lineage>
        <taxon>Bacteria</taxon>
        <taxon>Pseudomonadati</taxon>
        <taxon>Thermodesulfobacteriota</taxon>
        <taxon>Desulfobacteria</taxon>
        <taxon>Desulfobacterales</taxon>
        <taxon>Desulfobacteraceae</taxon>
        <taxon>Desulforapulum</taxon>
    </lineage>
</organism>
<dbReference type="EC" id="4.1.99.23" evidence="1"/>
<dbReference type="EMBL" id="CP001087">
    <property type="protein sequence ID" value="ACN13790.1"/>
    <property type="molecule type" value="Genomic_DNA"/>
</dbReference>
<dbReference type="RefSeq" id="WP_012663038.1">
    <property type="nucleotide sequence ID" value="NC_012108.1"/>
</dbReference>
<dbReference type="SMR" id="C0QJ00"/>
<dbReference type="STRING" id="177437.HRM2_06760"/>
<dbReference type="KEGG" id="dat:HRM2_06760"/>
<dbReference type="eggNOG" id="COG0422">
    <property type="taxonomic scope" value="Bacteria"/>
</dbReference>
<dbReference type="HOGENOM" id="CLU_013181_2_2_7"/>
<dbReference type="OrthoDB" id="9805897at2"/>
<dbReference type="Proteomes" id="UP000000442">
    <property type="component" value="Chromosome"/>
</dbReference>
<dbReference type="GO" id="GO:0005829">
    <property type="term" value="C:cytosol"/>
    <property type="evidence" value="ECO:0007669"/>
    <property type="project" value="TreeGrafter"/>
</dbReference>
<dbReference type="GO" id="GO:0051539">
    <property type="term" value="F:4 iron, 4 sulfur cluster binding"/>
    <property type="evidence" value="ECO:0007669"/>
    <property type="project" value="UniProtKB-KW"/>
</dbReference>
<dbReference type="GO" id="GO:0031419">
    <property type="term" value="F:cobalamin binding"/>
    <property type="evidence" value="ECO:0007669"/>
    <property type="project" value="InterPro"/>
</dbReference>
<dbReference type="GO" id="GO:0016829">
    <property type="term" value="F:lyase activity"/>
    <property type="evidence" value="ECO:0007669"/>
    <property type="project" value="UniProtKB-KW"/>
</dbReference>
<dbReference type="GO" id="GO:0046872">
    <property type="term" value="F:metal ion binding"/>
    <property type="evidence" value="ECO:0007669"/>
    <property type="project" value="UniProtKB-KW"/>
</dbReference>
<dbReference type="GO" id="GO:0009236">
    <property type="term" value="P:cobalamin biosynthetic process"/>
    <property type="evidence" value="ECO:0007669"/>
    <property type="project" value="UniProtKB-KW"/>
</dbReference>
<dbReference type="GO" id="GO:0009228">
    <property type="term" value="P:thiamine biosynthetic process"/>
    <property type="evidence" value="ECO:0007669"/>
    <property type="project" value="InterPro"/>
</dbReference>
<dbReference type="Gene3D" id="3.20.20.540">
    <property type="entry name" value="Radical SAM ThiC family, central domain"/>
    <property type="match status" value="1"/>
</dbReference>
<dbReference type="InterPro" id="IPR016176">
    <property type="entry name" value="Cbl-dep_enz_cat"/>
</dbReference>
<dbReference type="InterPro" id="IPR038521">
    <property type="entry name" value="ThiC/Bza_core_dom"/>
</dbReference>
<dbReference type="InterPro" id="IPR002817">
    <property type="entry name" value="ThiC/BzaA/B"/>
</dbReference>
<dbReference type="NCBIfam" id="NF009895">
    <property type="entry name" value="PRK13352.1"/>
    <property type="match status" value="1"/>
</dbReference>
<dbReference type="NCBIfam" id="TIGR00190">
    <property type="entry name" value="thiC"/>
    <property type="match status" value="1"/>
</dbReference>
<dbReference type="PANTHER" id="PTHR30557:SF1">
    <property type="entry name" value="PHOSPHOMETHYLPYRIMIDINE SYNTHASE, CHLOROPLASTIC"/>
    <property type="match status" value="1"/>
</dbReference>
<dbReference type="PANTHER" id="PTHR30557">
    <property type="entry name" value="THIAMINE BIOSYNTHESIS PROTEIN THIC"/>
    <property type="match status" value="1"/>
</dbReference>
<dbReference type="Pfam" id="PF01964">
    <property type="entry name" value="ThiC_Rad_SAM"/>
    <property type="match status" value="1"/>
</dbReference>
<dbReference type="SFLD" id="SFLDF00407">
    <property type="entry name" value="phosphomethylpyrimidine_syntha"/>
    <property type="match status" value="1"/>
</dbReference>
<dbReference type="SFLD" id="SFLDG01114">
    <property type="entry name" value="phosphomethylpyrimidine_syntha"/>
    <property type="match status" value="1"/>
</dbReference>
<dbReference type="SFLD" id="SFLDS00113">
    <property type="entry name" value="Radical_SAM_Phosphomethylpyrim"/>
    <property type="match status" value="1"/>
</dbReference>
<dbReference type="SUPFAM" id="SSF51703">
    <property type="entry name" value="Cobalamin (vitamin B12)-dependent enzymes"/>
    <property type="match status" value="1"/>
</dbReference>
<evidence type="ECO:0000250" key="1">
    <source>
        <dbReference type="UniProtKB" id="P61425"/>
    </source>
</evidence>
<evidence type="ECO:0000250" key="2">
    <source>
        <dbReference type="UniProtKB" id="Q9A6Q5"/>
    </source>
</evidence>
<evidence type="ECO:0000305" key="3"/>
<evidence type="ECO:0000312" key="4">
    <source>
        <dbReference type="EMBL" id="ACN13790.1"/>
    </source>
</evidence>
<gene>
    <name evidence="1" type="primary">bzaF</name>
    <name evidence="4" type="synonym">thiC</name>
    <name type="ordered locus">HRM2_06760</name>
</gene>
<sequence length="439" mass="48307">MKTQIELARDGIISRQMEQVAADENFNPEIIRTRVAAGEIVIPCNPNRTNQKVVGIGTGLRTKINASIGTSSDICSIENEVQKAIAIEEEGADTLMELSAGGNLDKVRQEVLKAVNLPVGNVPLYQAFKETGRKYNDPSKLDPEFLFDLIERQLSDGLSFMAIHCGINQYTIERLRKQGFRYGGLASKGGTFMVAWMDATGKENPLYEQFDRVCTLMKKYDAVLSLGNGIRAGAIHDSHDRAQMAEMIINCELAELGREQGCQMMVEGPGHVPLDEIQANIILEKRMSGNAPYYVLGPIPADTGAGYDHITSAIGAASSTWHGADLICYITPAEHLALPTEADVREGVRATKLAVRIGDIAKYPDRRENERLASMARRDMRWDDLEQHLLFPDIARKTRASRAPEDGGTCTMCGDFCAMKKGNEIFKDDIKNDKIAPGA</sequence>
<protein>
    <recommendedName>
        <fullName evidence="1">5-hydroxybenzimidazole synthase</fullName>
        <shortName evidence="1">5-OHBza synthase</shortName>
        <shortName evidence="1">HBI synthase</shortName>
        <ecNumber evidence="1">4.1.99.23</ecNumber>
    </recommendedName>
</protein>
<proteinExistence type="inferred from homology"/>
<feature type="chain" id="PRO_1000202650" description="5-hydroxybenzimidazole synthase">
    <location>
        <begin position="1"/>
        <end position="439"/>
    </location>
</feature>
<feature type="binding site" evidence="2">
    <location>
        <position position="96"/>
    </location>
    <ligand>
        <name>substrate</name>
    </ligand>
</feature>
<feature type="binding site" evidence="2">
    <location>
        <position position="125"/>
    </location>
    <ligand>
        <name>substrate</name>
    </ligand>
</feature>
<feature type="binding site" evidence="2">
    <location>
        <position position="164"/>
    </location>
    <ligand>
        <name>substrate</name>
    </ligand>
</feature>
<feature type="binding site" evidence="2">
    <location>
        <begin position="187"/>
        <end position="189"/>
    </location>
    <ligand>
        <name>substrate</name>
    </ligand>
</feature>
<feature type="binding site" evidence="2">
    <location>
        <begin position="228"/>
        <end position="231"/>
    </location>
    <ligand>
        <name>substrate</name>
    </ligand>
</feature>
<feature type="binding site" evidence="2">
    <location>
        <position position="267"/>
    </location>
    <ligand>
        <name>substrate</name>
    </ligand>
</feature>
<feature type="binding site" evidence="2">
    <location>
        <position position="271"/>
    </location>
    <ligand>
        <name>Zn(2+)</name>
        <dbReference type="ChEBI" id="CHEBI:29105"/>
    </ligand>
</feature>
<feature type="binding site" evidence="2">
    <location>
        <position position="294"/>
    </location>
    <ligand>
        <name>substrate</name>
    </ligand>
</feature>
<feature type="binding site" evidence="2">
    <location>
        <position position="335"/>
    </location>
    <ligand>
        <name>Zn(2+)</name>
        <dbReference type="ChEBI" id="CHEBI:29105"/>
    </ligand>
</feature>
<feature type="binding site" evidence="2">
    <location>
        <position position="410"/>
    </location>
    <ligand>
        <name>[4Fe-4S] cluster</name>
        <dbReference type="ChEBI" id="CHEBI:49883"/>
        <note>4Fe-4S-S-AdoMet</note>
    </ligand>
</feature>
<feature type="binding site" evidence="2">
    <location>
        <position position="413"/>
    </location>
    <ligand>
        <name>[4Fe-4S] cluster</name>
        <dbReference type="ChEBI" id="CHEBI:49883"/>
        <note>4Fe-4S-S-AdoMet</note>
    </ligand>
</feature>
<feature type="binding site" evidence="2">
    <location>
        <position position="417"/>
    </location>
    <ligand>
        <name>[4Fe-4S] cluster</name>
        <dbReference type="ChEBI" id="CHEBI:49883"/>
        <note>4Fe-4S-S-AdoMet</note>
    </ligand>
</feature>
<comment type="function">
    <text evidence="1">Catalyzes the conversion of aminoimidazole ribotide (AIR) to 5-hydroxybenzimidazole (5-HBI) in a radical S-adenosyl-L-methionine (SAM)-dependent reaction. Is thus involved in the anaerobic biosynthesis of the benzimidazole lower axial ligand of the cobamide produced by D.autotrophicum.</text>
</comment>
<comment type="catalytic activity">
    <reaction evidence="1">
        <text>5-amino-1-(5-phospho-beta-D-ribosyl)imidazole + AH2 + S-adenosyl-L-methionine = 5-hydroxybenzimidazole + 5'-deoxyadenosine + formate + L-methionine + A + NH4(+) + phosphate + 2 H(+)</text>
        <dbReference type="Rhea" id="RHEA:53504"/>
        <dbReference type="ChEBI" id="CHEBI:13193"/>
        <dbReference type="ChEBI" id="CHEBI:15378"/>
        <dbReference type="ChEBI" id="CHEBI:15740"/>
        <dbReference type="ChEBI" id="CHEBI:17319"/>
        <dbReference type="ChEBI" id="CHEBI:17499"/>
        <dbReference type="ChEBI" id="CHEBI:28938"/>
        <dbReference type="ChEBI" id="CHEBI:43474"/>
        <dbReference type="ChEBI" id="CHEBI:57844"/>
        <dbReference type="ChEBI" id="CHEBI:59789"/>
        <dbReference type="ChEBI" id="CHEBI:137404"/>
        <dbReference type="ChEBI" id="CHEBI:137981"/>
        <dbReference type="EC" id="4.1.99.23"/>
    </reaction>
</comment>
<comment type="cofactor">
    <cofactor evidence="1">
        <name>[4Fe-4S] cluster</name>
        <dbReference type="ChEBI" id="CHEBI:49883"/>
    </cofactor>
    <text evidence="2">Binds 1 [4Fe-4S] cluster per subunit. The cluster is coordinated with 3 cysteines and an exchangeable S-adenosyl-L-methionine.</text>
</comment>
<comment type="subunit">
    <text evidence="1">Homodimer.</text>
</comment>
<comment type="similarity">
    <text evidence="3">Belongs to the ThiC family. 5-hydroxybenzimidazole synthase subfamily.</text>
</comment>
<name>BZAF_DESAH</name>
<reference key="1">
    <citation type="journal article" date="2009" name="Environ. Microbiol.">
        <title>Genome sequence of Desulfobacterium autotrophicum HRM2, a marine sulfate reducer oxidizing organic carbon completely to carbon dioxide.</title>
        <authorList>
            <person name="Strittmatter A.W."/>
            <person name="Liesegang H."/>
            <person name="Rabus R."/>
            <person name="Decker I."/>
            <person name="Amann J."/>
            <person name="Andres S."/>
            <person name="Henne A."/>
            <person name="Fricke W.F."/>
            <person name="Martinez-Arias R."/>
            <person name="Bartels D."/>
            <person name="Goesmann A."/>
            <person name="Krause L."/>
            <person name="Puehler A."/>
            <person name="Klenk H.P."/>
            <person name="Richter M."/>
            <person name="Schuler M."/>
            <person name="Gloeckner F.O."/>
            <person name="Meyerdierks A."/>
            <person name="Gottschalk G."/>
            <person name="Amann R."/>
        </authorList>
    </citation>
    <scope>NUCLEOTIDE SEQUENCE [LARGE SCALE GENOMIC DNA]</scope>
    <source>
        <strain>ATCC 43914 / DSM 3382 / VKM B-1955 / HRM2</strain>
    </source>
</reference>